<accession>P0CP73</accession>
<accession>Q55K29</accession>
<accession>Q5K9H0</accession>
<protein>
    <recommendedName>
        <fullName>EKC/KEOPS complex subunit BUD32</fullName>
        <ecNumber evidence="2">3.6.-.-</ecNumber>
    </recommendedName>
    <alternativeName>
        <fullName>Atypical serine/threonine protein kinase BUD32</fullName>
        <ecNumber evidence="1">2.7.11.1</ecNumber>
    </alternativeName>
</protein>
<comment type="function">
    <text evidence="1">Component of the EKC/KEOPS complex that is required for the formation of a threonylcarbamoyl group on adenosine at position 37 (t(6)A37) in tRNAs that read codons beginning with adenine. The complex is probably involved in the transfer of the threonylcarbamoyl moiety of threonylcarbamoyl-AMP (TC-AMP) to the N6 group of A37. BUD32 has ATPase activity in the context of the EKC/KEOPS complex and likely plays a supporting role to the catalytic subunit KAE1. The EKC/KEOPS complex also promotes both telomere uncapping and telomere elongation. The complex is required for efficient recruitment of transcriptional coactivators.</text>
</comment>
<comment type="catalytic activity">
    <reaction evidence="1">
        <text>L-seryl-[protein] + ATP = O-phospho-L-seryl-[protein] + ADP + H(+)</text>
        <dbReference type="Rhea" id="RHEA:17989"/>
        <dbReference type="Rhea" id="RHEA-COMP:9863"/>
        <dbReference type="Rhea" id="RHEA-COMP:11604"/>
        <dbReference type="ChEBI" id="CHEBI:15378"/>
        <dbReference type="ChEBI" id="CHEBI:29999"/>
        <dbReference type="ChEBI" id="CHEBI:30616"/>
        <dbReference type="ChEBI" id="CHEBI:83421"/>
        <dbReference type="ChEBI" id="CHEBI:456216"/>
        <dbReference type="EC" id="2.7.11.1"/>
    </reaction>
</comment>
<comment type="catalytic activity">
    <reaction evidence="1">
        <text>L-threonyl-[protein] + ATP = O-phospho-L-threonyl-[protein] + ADP + H(+)</text>
        <dbReference type="Rhea" id="RHEA:46608"/>
        <dbReference type="Rhea" id="RHEA-COMP:11060"/>
        <dbReference type="Rhea" id="RHEA-COMP:11605"/>
        <dbReference type="ChEBI" id="CHEBI:15378"/>
        <dbReference type="ChEBI" id="CHEBI:30013"/>
        <dbReference type="ChEBI" id="CHEBI:30616"/>
        <dbReference type="ChEBI" id="CHEBI:61977"/>
        <dbReference type="ChEBI" id="CHEBI:456216"/>
        <dbReference type="EC" id="2.7.11.1"/>
    </reaction>
</comment>
<comment type="subunit">
    <text evidence="1">Component of the EKC/KEOPS complex composed of at least BUD32, CGI121, GON7, KAE1 and PCC1; the whole complex dimerizes.</text>
</comment>
<comment type="subcellular location">
    <subcellularLocation>
        <location evidence="1">Cytoplasm</location>
    </subcellularLocation>
    <subcellularLocation>
        <location evidence="1">Nucleus</location>
    </subcellularLocation>
    <subcellularLocation>
        <location evidence="1">Chromosome</location>
        <location evidence="1">Telomere</location>
    </subcellularLocation>
</comment>
<comment type="domain">
    <text evidence="1 2">This protein is considered an atypical serine/threonine kinase, because it lacks the conventional structural elements necessary for the substrate recognition as well as a lysine residue that in all other serine/threonine kinases participates in the catalytic event (By similarity). BUD32 has protein kinase activity in vitro, but in the context of the EKC/KEOPS complex, the catalytic subunit KAE1 switches the activity of BUD32 from kinase into ATPase (By similarity).</text>
</comment>
<comment type="similarity">
    <text evidence="6">Belongs to the protein kinase superfamily. BUD32 family.</text>
</comment>
<organism>
    <name type="scientific">Cryptococcus neoformans var. neoformans serotype D (strain B-3501A)</name>
    <name type="common">Filobasidiella neoformans</name>
    <dbReference type="NCBI Taxonomy" id="283643"/>
    <lineage>
        <taxon>Eukaryota</taxon>
        <taxon>Fungi</taxon>
        <taxon>Dikarya</taxon>
        <taxon>Basidiomycota</taxon>
        <taxon>Agaricomycotina</taxon>
        <taxon>Tremellomycetes</taxon>
        <taxon>Tremellales</taxon>
        <taxon>Cryptococcaceae</taxon>
        <taxon>Cryptococcus</taxon>
        <taxon>Cryptococcus neoformans species complex</taxon>
    </lineage>
</organism>
<keyword id="KW-0010">Activator</keyword>
<keyword id="KW-0067">ATP-binding</keyword>
<keyword id="KW-0158">Chromosome</keyword>
<keyword id="KW-0963">Cytoplasm</keyword>
<keyword id="KW-0378">Hydrolase</keyword>
<keyword id="KW-0418">Kinase</keyword>
<keyword id="KW-0547">Nucleotide-binding</keyword>
<keyword id="KW-0539">Nucleus</keyword>
<keyword id="KW-0597">Phosphoprotein</keyword>
<keyword id="KW-0723">Serine/threonine-protein kinase</keyword>
<keyword id="KW-0779">Telomere</keyword>
<keyword id="KW-0804">Transcription</keyword>
<keyword id="KW-0805">Transcription regulation</keyword>
<keyword id="KW-0808">Transferase</keyword>
<keyword id="KW-0819">tRNA processing</keyword>
<proteinExistence type="inferred from homology"/>
<gene>
    <name type="primary">BUD32</name>
    <name type="ordered locus">CNBK1570</name>
</gene>
<sequence>MAASTPLLSRGTLIKQGAEAKVYALPSLFPEPTTYHPGSSSSFSAASPTPVILKHRFTKTYRHPTLDASLTSQRLTFEARALARAAKAGVTVPKVVWVDEKAGVIGMERIEGWSVREILGGGAEGEVEVIEEQEIEEDVENKAEDSAVREEPEGPESEGLKALKNLGVTQEHLMRSIGAALARLHKTMIIHGDLTTSNMMVRLTPGGSGPYEIVLIDFGLSSQAQFPENYAVDLYVLERAFASTHPRSEKLYAGVLETYAEGLGEKKWKPIQIKLKDVRRRGRKRDMTG</sequence>
<reference key="1">
    <citation type="journal article" date="2005" name="Science">
        <title>The genome of the basidiomycetous yeast and human pathogen Cryptococcus neoformans.</title>
        <authorList>
            <person name="Loftus B.J."/>
            <person name="Fung E."/>
            <person name="Roncaglia P."/>
            <person name="Rowley D."/>
            <person name="Amedeo P."/>
            <person name="Bruno D."/>
            <person name="Vamathevan J."/>
            <person name="Miranda M."/>
            <person name="Anderson I.J."/>
            <person name="Fraser J.A."/>
            <person name="Allen J.E."/>
            <person name="Bosdet I.E."/>
            <person name="Brent M.R."/>
            <person name="Chiu R."/>
            <person name="Doering T.L."/>
            <person name="Donlin M.J."/>
            <person name="D'Souza C.A."/>
            <person name="Fox D.S."/>
            <person name="Grinberg V."/>
            <person name="Fu J."/>
            <person name="Fukushima M."/>
            <person name="Haas B.J."/>
            <person name="Huang J.C."/>
            <person name="Janbon G."/>
            <person name="Jones S.J.M."/>
            <person name="Koo H.L."/>
            <person name="Krzywinski M.I."/>
            <person name="Kwon-Chung K.J."/>
            <person name="Lengeler K.B."/>
            <person name="Maiti R."/>
            <person name="Marra M.A."/>
            <person name="Marra R.E."/>
            <person name="Mathewson C.A."/>
            <person name="Mitchell T.G."/>
            <person name="Pertea M."/>
            <person name="Riggs F.R."/>
            <person name="Salzberg S.L."/>
            <person name="Schein J.E."/>
            <person name="Shvartsbeyn A."/>
            <person name="Shin H."/>
            <person name="Shumway M."/>
            <person name="Specht C.A."/>
            <person name="Suh B.B."/>
            <person name="Tenney A."/>
            <person name="Utterback T.R."/>
            <person name="Wickes B.L."/>
            <person name="Wortman J.R."/>
            <person name="Wye N.H."/>
            <person name="Kronstad J.W."/>
            <person name="Lodge J.K."/>
            <person name="Heitman J."/>
            <person name="Davis R.W."/>
            <person name="Fraser C.M."/>
            <person name="Hyman R.W."/>
        </authorList>
    </citation>
    <scope>NUCLEOTIDE SEQUENCE [LARGE SCALE GENOMIC DNA]</scope>
    <source>
        <strain>B-3501A</strain>
    </source>
</reference>
<dbReference type="EC" id="3.6.-.-" evidence="2"/>
<dbReference type="EC" id="2.7.11.1" evidence="1"/>
<dbReference type="EMBL" id="AAEY01000052">
    <property type="protein sequence ID" value="EAL18136.1"/>
    <property type="molecule type" value="Genomic_DNA"/>
</dbReference>
<dbReference type="RefSeq" id="XP_772783.1">
    <property type="nucleotide sequence ID" value="XM_767690.1"/>
</dbReference>
<dbReference type="SMR" id="P0CP73"/>
<dbReference type="GeneID" id="4938853"/>
<dbReference type="KEGG" id="cnb:CNBK1570"/>
<dbReference type="VEuPathDB" id="FungiDB:CNBK1570"/>
<dbReference type="HOGENOM" id="CLU_063953_1_1_1"/>
<dbReference type="OrthoDB" id="7348at5206"/>
<dbReference type="GO" id="GO:0000781">
    <property type="term" value="C:chromosome, telomeric region"/>
    <property type="evidence" value="ECO:0007669"/>
    <property type="project" value="UniProtKB-SubCell"/>
</dbReference>
<dbReference type="GO" id="GO:0005829">
    <property type="term" value="C:cytosol"/>
    <property type="evidence" value="ECO:0007669"/>
    <property type="project" value="TreeGrafter"/>
</dbReference>
<dbReference type="GO" id="GO:0000408">
    <property type="term" value="C:EKC/KEOPS complex"/>
    <property type="evidence" value="ECO:0007669"/>
    <property type="project" value="TreeGrafter"/>
</dbReference>
<dbReference type="GO" id="GO:0005634">
    <property type="term" value="C:nucleus"/>
    <property type="evidence" value="ECO:0007669"/>
    <property type="project" value="UniProtKB-SubCell"/>
</dbReference>
<dbReference type="GO" id="GO:0005524">
    <property type="term" value="F:ATP binding"/>
    <property type="evidence" value="ECO:0007669"/>
    <property type="project" value="UniProtKB-KW"/>
</dbReference>
<dbReference type="GO" id="GO:0016787">
    <property type="term" value="F:hydrolase activity"/>
    <property type="evidence" value="ECO:0007669"/>
    <property type="project" value="UniProtKB-KW"/>
</dbReference>
<dbReference type="GO" id="GO:0106310">
    <property type="term" value="F:protein serine kinase activity"/>
    <property type="evidence" value="ECO:0007669"/>
    <property type="project" value="RHEA"/>
</dbReference>
<dbReference type="GO" id="GO:0004674">
    <property type="term" value="F:protein serine/threonine kinase activity"/>
    <property type="evidence" value="ECO:0007669"/>
    <property type="project" value="UniProtKB-KW"/>
</dbReference>
<dbReference type="GO" id="GO:0008033">
    <property type="term" value="P:tRNA processing"/>
    <property type="evidence" value="ECO:0007669"/>
    <property type="project" value="UniProtKB-KW"/>
</dbReference>
<dbReference type="GO" id="GO:0070525">
    <property type="term" value="P:tRNA threonylcarbamoyladenosine metabolic process"/>
    <property type="evidence" value="ECO:0007669"/>
    <property type="project" value="TreeGrafter"/>
</dbReference>
<dbReference type="FunFam" id="3.30.200.20:FF:000201">
    <property type="entry name" value="TP53-regulating kinase isoform X1"/>
    <property type="match status" value="1"/>
</dbReference>
<dbReference type="FunFam" id="1.10.510.10:FF:000323">
    <property type="entry name" value="TP53-regulating kinase, putative"/>
    <property type="match status" value="1"/>
</dbReference>
<dbReference type="Gene3D" id="3.30.200.20">
    <property type="entry name" value="Phosphorylase Kinase, domain 1"/>
    <property type="match status" value="1"/>
</dbReference>
<dbReference type="Gene3D" id="1.10.510.10">
    <property type="entry name" value="Transferase(Phosphotransferase) domain 1"/>
    <property type="match status" value="1"/>
</dbReference>
<dbReference type="InterPro" id="IPR002575">
    <property type="entry name" value="Aminoglycoside_PTrfase"/>
</dbReference>
<dbReference type="InterPro" id="IPR011009">
    <property type="entry name" value="Kinase-like_dom_sf"/>
</dbReference>
<dbReference type="InterPro" id="IPR000719">
    <property type="entry name" value="Prot_kinase_dom"/>
</dbReference>
<dbReference type="InterPro" id="IPR008266">
    <property type="entry name" value="Tyr_kinase_AS"/>
</dbReference>
<dbReference type="PANTHER" id="PTHR12209:SF0">
    <property type="entry name" value="EKC_KEOPS COMPLEX SUBUNIT TP53RK"/>
    <property type="match status" value="1"/>
</dbReference>
<dbReference type="PANTHER" id="PTHR12209">
    <property type="entry name" value="NON-SPECIFIC SERINE/THREONINE PROTEIN KINASE"/>
    <property type="match status" value="1"/>
</dbReference>
<dbReference type="Pfam" id="PF01636">
    <property type="entry name" value="APH"/>
    <property type="match status" value="1"/>
</dbReference>
<dbReference type="SUPFAM" id="SSF56112">
    <property type="entry name" value="Protein kinase-like (PK-like)"/>
    <property type="match status" value="1"/>
</dbReference>
<dbReference type="PROSITE" id="PS50011">
    <property type="entry name" value="PROTEIN_KINASE_DOM"/>
    <property type="match status" value="1"/>
</dbReference>
<dbReference type="PROSITE" id="PS00109">
    <property type="entry name" value="PROTEIN_KINASE_TYR"/>
    <property type="match status" value="1"/>
</dbReference>
<name>BUD32_CRYNB</name>
<feature type="chain" id="PRO_0000410195" description="EKC/KEOPS complex subunit BUD32">
    <location>
        <begin position="1"/>
        <end position="289"/>
    </location>
</feature>
<feature type="domain" description="Protein kinase" evidence="3">
    <location>
        <begin position="8"/>
        <end position="289"/>
    </location>
</feature>
<feature type="region of interest" description="Disordered" evidence="5">
    <location>
        <begin position="134"/>
        <end position="158"/>
    </location>
</feature>
<feature type="compositionally biased region" description="Basic and acidic residues" evidence="5">
    <location>
        <begin position="140"/>
        <end position="152"/>
    </location>
</feature>
<feature type="active site" description="Proton acceptor" evidence="3 4">
    <location>
        <position position="193"/>
    </location>
</feature>
<feature type="binding site" evidence="3">
    <location>
        <begin position="14"/>
        <end position="22"/>
    </location>
    <ligand>
        <name>ATP</name>
        <dbReference type="ChEBI" id="CHEBI:30616"/>
    </ligand>
</feature>
<feature type="binding site" evidence="3">
    <location>
        <position position="54"/>
    </location>
    <ligand>
        <name>ATP</name>
        <dbReference type="ChEBI" id="CHEBI:30616"/>
    </ligand>
</feature>
<evidence type="ECO:0000250" key="1">
    <source>
        <dbReference type="UniProtKB" id="P53323"/>
    </source>
</evidence>
<evidence type="ECO:0000250" key="2">
    <source>
        <dbReference type="UniProtKB" id="Q9UYB9"/>
    </source>
</evidence>
<evidence type="ECO:0000255" key="3">
    <source>
        <dbReference type="PROSITE-ProRule" id="PRU00159"/>
    </source>
</evidence>
<evidence type="ECO:0000255" key="4">
    <source>
        <dbReference type="PROSITE-ProRule" id="PRU10028"/>
    </source>
</evidence>
<evidence type="ECO:0000256" key="5">
    <source>
        <dbReference type="SAM" id="MobiDB-lite"/>
    </source>
</evidence>
<evidence type="ECO:0000305" key="6"/>